<keyword id="KW-0963">Cytoplasm</keyword>
<keyword id="KW-0448">Lipopolysaccharide biosynthesis</keyword>
<keyword id="KW-1185">Reference proteome</keyword>
<keyword id="KW-0808">Transferase</keyword>
<feature type="chain" id="PRO_0000187147" description="2-dehydro-3-deoxyphosphooctonate aldolase">
    <location>
        <begin position="1"/>
        <end position="284"/>
    </location>
</feature>
<proteinExistence type="inferred from homology"/>
<gene>
    <name evidence="1" type="primary">kdsA</name>
    <name type="ordered locus">plu2073</name>
</gene>
<reference key="1">
    <citation type="journal article" date="2003" name="Nat. Biotechnol.">
        <title>The genome sequence of the entomopathogenic bacterium Photorhabdus luminescens.</title>
        <authorList>
            <person name="Duchaud E."/>
            <person name="Rusniok C."/>
            <person name="Frangeul L."/>
            <person name="Buchrieser C."/>
            <person name="Givaudan A."/>
            <person name="Taourit S."/>
            <person name="Bocs S."/>
            <person name="Boursaux-Eude C."/>
            <person name="Chandler M."/>
            <person name="Charles J.-F."/>
            <person name="Dassa E."/>
            <person name="Derose R."/>
            <person name="Derzelle S."/>
            <person name="Freyssinet G."/>
            <person name="Gaudriault S."/>
            <person name="Medigue C."/>
            <person name="Lanois A."/>
            <person name="Powell K."/>
            <person name="Siguier P."/>
            <person name="Vincent R."/>
            <person name="Wingate V."/>
            <person name="Zouine M."/>
            <person name="Glaser P."/>
            <person name="Boemare N."/>
            <person name="Danchin A."/>
            <person name="Kunst F."/>
        </authorList>
    </citation>
    <scope>NUCLEOTIDE SEQUENCE [LARGE SCALE GENOMIC DNA]</scope>
    <source>
        <strain>DSM 15139 / CIP 105565 / TT01</strain>
    </source>
</reference>
<evidence type="ECO:0000255" key="1">
    <source>
        <dbReference type="HAMAP-Rule" id="MF_00056"/>
    </source>
</evidence>
<accession>Q7N583</accession>
<sequence>MQQKVVHIGDIKVANDLPFVLFGGMNVLESRDLAMSICEHYVTVTQKLGIPYVFKASFDKANRSSIHSYRGPGLEEGMKIFQELKQTFGVKIITDVHESAQAQPVAEVVDVIQLPAFLARQTDLVEAMARTGAVINVKKPQFISPGQMGNIVDKFKEGGNDQVILCDRGSNFGYDNLVVDMLGFNVMAQATGGHPVIFDVTHSLQCRDPFGAASGGRRAQVAELARAGMAVGIAGLFLEAHPDPANAMCDGPSALPLAKLEPFLSQMKAIDDVVKSFPQLDTSK</sequence>
<comment type="catalytic activity">
    <reaction evidence="1">
        <text>D-arabinose 5-phosphate + phosphoenolpyruvate + H2O = 3-deoxy-alpha-D-manno-2-octulosonate-8-phosphate + phosphate</text>
        <dbReference type="Rhea" id="RHEA:14053"/>
        <dbReference type="ChEBI" id="CHEBI:15377"/>
        <dbReference type="ChEBI" id="CHEBI:43474"/>
        <dbReference type="ChEBI" id="CHEBI:57693"/>
        <dbReference type="ChEBI" id="CHEBI:58702"/>
        <dbReference type="ChEBI" id="CHEBI:85985"/>
        <dbReference type="EC" id="2.5.1.55"/>
    </reaction>
</comment>
<comment type="pathway">
    <text evidence="1">Carbohydrate biosynthesis; 3-deoxy-D-manno-octulosonate biosynthesis; 3-deoxy-D-manno-octulosonate from D-ribulose 5-phosphate: step 2/3.</text>
</comment>
<comment type="pathway">
    <text evidence="1">Bacterial outer membrane biogenesis; lipopolysaccharide biosynthesis.</text>
</comment>
<comment type="subcellular location">
    <subcellularLocation>
        <location evidence="1">Cytoplasm</location>
    </subcellularLocation>
</comment>
<comment type="similarity">
    <text evidence="1">Belongs to the KdsA family.</text>
</comment>
<organism>
    <name type="scientific">Photorhabdus laumondii subsp. laumondii (strain DSM 15139 / CIP 105565 / TT01)</name>
    <name type="common">Photorhabdus luminescens subsp. laumondii</name>
    <dbReference type="NCBI Taxonomy" id="243265"/>
    <lineage>
        <taxon>Bacteria</taxon>
        <taxon>Pseudomonadati</taxon>
        <taxon>Pseudomonadota</taxon>
        <taxon>Gammaproteobacteria</taxon>
        <taxon>Enterobacterales</taxon>
        <taxon>Morganellaceae</taxon>
        <taxon>Photorhabdus</taxon>
    </lineage>
</organism>
<protein>
    <recommendedName>
        <fullName evidence="1">2-dehydro-3-deoxyphosphooctonate aldolase</fullName>
        <ecNumber evidence="1">2.5.1.55</ecNumber>
    </recommendedName>
    <alternativeName>
        <fullName evidence="1">3-deoxy-D-manno-octulosonic acid 8-phosphate synthase</fullName>
    </alternativeName>
    <alternativeName>
        <fullName evidence="1">KDO-8-phosphate synthase</fullName>
        <shortName evidence="1">KDO 8-P synthase</shortName>
        <shortName evidence="1">KDOPS</shortName>
    </alternativeName>
    <alternativeName>
        <fullName evidence="1">Phospho-2-dehydro-3-deoxyoctonate aldolase</fullName>
    </alternativeName>
</protein>
<name>KDSA_PHOLL</name>
<dbReference type="EC" id="2.5.1.55" evidence="1"/>
<dbReference type="EMBL" id="BX571866">
    <property type="protein sequence ID" value="CAE14366.1"/>
    <property type="molecule type" value="Genomic_DNA"/>
</dbReference>
<dbReference type="RefSeq" id="WP_011146328.1">
    <property type="nucleotide sequence ID" value="NC_005126.1"/>
</dbReference>
<dbReference type="SMR" id="Q7N583"/>
<dbReference type="STRING" id="243265.plu2073"/>
<dbReference type="GeneID" id="48848349"/>
<dbReference type="KEGG" id="plu:plu2073"/>
<dbReference type="eggNOG" id="COG2877">
    <property type="taxonomic scope" value="Bacteria"/>
</dbReference>
<dbReference type="HOGENOM" id="CLU_036666_0_0_6"/>
<dbReference type="OrthoDB" id="9776934at2"/>
<dbReference type="UniPathway" id="UPA00030"/>
<dbReference type="UniPathway" id="UPA00357">
    <property type="reaction ID" value="UER00474"/>
</dbReference>
<dbReference type="Proteomes" id="UP000002514">
    <property type="component" value="Chromosome"/>
</dbReference>
<dbReference type="GO" id="GO:0005737">
    <property type="term" value="C:cytoplasm"/>
    <property type="evidence" value="ECO:0007669"/>
    <property type="project" value="UniProtKB-SubCell"/>
</dbReference>
<dbReference type="GO" id="GO:0008676">
    <property type="term" value="F:3-deoxy-8-phosphooctulonate synthase activity"/>
    <property type="evidence" value="ECO:0007669"/>
    <property type="project" value="UniProtKB-UniRule"/>
</dbReference>
<dbReference type="GO" id="GO:0019294">
    <property type="term" value="P:keto-3-deoxy-D-manno-octulosonic acid biosynthetic process"/>
    <property type="evidence" value="ECO:0007669"/>
    <property type="project" value="UniProtKB-UniRule"/>
</dbReference>
<dbReference type="FunFam" id="3.20.20.70:FF:000058">
    <property type="entry name" value="2-dehydro-3-deoxyphosphooctonate aldolase"/>
    <property type="match status" value="1"/>
</dbReference>
<dbReference type="Gene3D" id="3.20.20.70">
    <property type="entry name" value="Aldolase class I"/>
    <property type="match status" value="1"/>
</dbReference>
<dbReference type="HAMAP" id="MF_00056">
    <property type="entry name" value="KDO8P_synth"/>
    <property type="match status" value="1"/>
</dbReference>
<dbReference type="InterPro" id="IPR013785">
    <property type="entry name" value="Aldolase_TIM"/>
</dbReference>
<dbReference type="InterPro" id="IPR006218">
    <property type="entry name" value="DAHP1/KDSA"/>
</dbReference>
<dbReference type="InterPro" id="IPR006269">
    <property type="entry name" value="KDO8P_synthase"/>
</dbReference>
<dbReference type="NCBIfam" id="TIGR01362">
    <property type="entry name" value="KDO8P_synth"/>
    <property type="match status" value="1"/>
</dbReference>
<dbReference type="NCBIfam" id="NF003543">
    <property type="entry name" value="PRK05198.1"/>
    <property type="match status" value="1"/>
</dbReference>
<dbReference type="NCBIfam" id="NF009109">
    <property type="entry name" value="PRK12457.1"/>
    <property type="match status" value="1"/>
</dbReference>
<dbReference type="PANTHER" id="PTHR21057">
    <property type="entry name" value="PHOSPHO-2-DEHYDRO-3-DEOXYHEPTONATE ALDOLASE"/>
    <property type="match status" value="1"/>
</dbReference>
<dbReference type="Pfam" id="PF00793">
    <property type="entry name" value="DAHP_synth_1"/>
    <property type="match status" value="1"/>
</dbReference>
<dbReference type="SUPFAM" id="SSF51569">
    <property type="entry name" value="Aldolase"/>
    <property type="match status" value="1"/>
</dbReference>